<reference key="1">
    <citation type="journal article" date="2009" name="BMC Genomics">
        <title>Pseudogene accumulation in the evolutionary histories of Salmonella enterica serovars Paratyphi A and Typhi.</title>
        <authorList>
            <person name="Holt K.E."/>
            <person name="Thomson N.R."/>
            <person name="Wain J."/>
            <person name="Langridge G.C."/>
            <person name="Hasan R."/>
            <person name="Bhutta Z.A."/>
            <person name="Quail M.A."/>
            <person name="Norbertczak H."/>
            <person name="Walker D."/>
            <person name="Simmonds M."/>
            <person name="White B."/>
            <person name="Bason N."/>
            <person name="Mungall K."/>
            <person name="Dougan G."/>
            <person name="Parkhill J."/>
        </authorList>
    </citation>
    <scope>NUCLEOTIDE SEQUENCE [LARGE SCALE GENOMIC DNA]</scope>
    <source>
        <strain>AKU_12601</strain>
    </source>
</reference>
<protein>
    <recommendedName>
        <fullName evidence="1">23S rRNA (uracil(747)-C(5))-methyltransferase RlmC</fullName>
        <ecNumber evidence="1">2.1.1.189</ecNumber>
    </recommendedName>
    <alternativeName>
        <fullName evidence="1">23S rRNA(m5U747)-methyltransferase</fullName>
    </alternativeName>
</protein>
<proteinExistence type="inferred from homology"/>
<dbReference type="EC" id="2.1.1.189" evidence="1"/>
<dbReference type="EMBL" id="FM200053">
    <property type="protein sequence ID" value="CAR59944.1"/>
    <property type="molecule type" value="Genomic_DNA"/>
</dbReference>
<dbReference type="RefSeq" id="WP_001149793.1">
    <property type="nucleotide sequence ID" value="NC_011147.1"/>
</dbReference>
<dbReference type="SMR" id="B5BBV5"/>
<dbReference type="KEGG" id="sek:SSPA1750"/>
<dbReference type="HOGENOM" id="CLU_014689_0_0_6"/>
<dbReference type="Proteomes" id="UP000001869">
    <property type="component" value="Chromosome"/>
</dbReference>
<dbReference type="GO" id="GO:0051539">
    <property type="term" value="F:4 iron, 4 sulfur cluster binding"/>
    <property type="evidence" value="ECO:0007669"/>
    <property type="project" value="UniProtKB-KW"/>
</dbReference>
<dbReference type="GO" id="GO:0005506">
    <property type="term" value="F:iron ion binding"/>
    <property type="evidence" value="ECO:0007669"/>
    <property type="project" value="UniProtKB-UniRule"/>
</dbReference>
<dbReference type="GO" id="GO:0070041">
    <property type="term" value="F:rRNA (uridine-C5-)-methyltransferase activity"/>
    <property type="evidence" value="ECO:0007669"/>
    <property type="project" value="UniProtKB-UniRule"/>
</dbReference>
<dbReference type="GO" id="GO:0070475">
    <property type="term" value="P:rRNA base methylation"/>
    <property type="evidence" value="ECO:0007669"/>
    <property type="project" value="TreeGrafter"/>
</dbReference>
<dbReference type="CDD" id="cd02440">
    <property type="entry name" value="AdoMet_MTases"/>
    <property type="match status" value="1"/>
</dbReference>
<dbReference type="FunFam" id="2.40.50.1070:FF:000002">
    <property type="entry name" value="23S rRNA (uracil(747)-C(5))-methyltransferase RlmC"/>
    <property type="match status" value="1"/>
</dbReference>
<dbReference type="FunFam" id="3.40.50.150:FF:000049">
    <property type="entry name" value="23S rRNA (uracil(747)-C(5))-methyltransferase RlmC"/>
    <property type="match status" value="1"/>
</dbReference>
<dbReference type="Gene3D" id="2.40.50.1070">
    <property type="match status" value="1"/>
</dbReference>
<dbReference type="Gene3D" id="3.40.50.150">
    <property type="entry name" value="Vaccinia Virus protein VP39"/>
    <property type="match status" value="1"/>
</dbReference>
<dbReference type="HAMAP" id="MF_01012">
    <property type="entry name" value="23SrRNA_methyltr_RlmC"/>
    <property type="match status" value="1"/>
</dbReference>
<dbReference type="InterPro" id="IPR011825">
    <property type="entry name" value="23SrRNA_MeTrfase_RlmC"/>
</dbReference>
<dbReference type="InterPro" id="IPR030390">
    <property type="entry name" value="MeTrfase_TrmA_AS"/>
</dbReference>
<dbReference type="InterPro" id="IPR030391">
    <property type="entry name" value="MeTrfase_TrmA_CS"/>
</dbReference>
<dbReference type="InterPro" id="IPR029063">
    <property type="entry name" value="SAM-dependent_MTases_sf"/>
</dbReference>
<dbReference type="InterPro" id="IPR010280">
    <property type="entry name" value="U5_MeTrfase_fam"/>
</dbReference>
<dbReference type="NCBIfam" id="TIGR02085">
    <property type="entry name" value="meth_trns_rumB"/>
    <property type="match status" value="1"/>
</dbReference>
<dbReference type="PANTHER" id="PTHR11061">
    <property type="entry name" value="RNA M5U METHYLTRANSFERASE"/>
    <property type="match status" value="1"/>
</dbReference>
<dbReference type="PANTHER" id="PTHR11061:SF30">
    <property type="entry name" value="TRNA (URACIL(54)-C(5))-METHYLTRANSFERASE"/>
    <property type="match status" value="1"/>
</dbReference>
<dbReference type="Pfam" id="PF05958">
    <property type="entry name" value="tRNA_U5-meth_tr"/>
    <property type="match status" value="1"/>
</dbReference>
<dbReference type="SUPFAM" id="SSF53335">
    <property type="entry name" value="S-adenosyl-L-methionine-dependent methyltransferases"/>
    <property type="match status" value="1"/>
</dbReference>
<dbReference type="PROSITE" id="PS51687">
    <property type="entry name" value="SAM_MT_RNA_M5U"/>
    <property type="match status" value="1"/>
</dbReference>
<dbReference type="PROSITE" id="PS01230">
    <property type="entry name" value="TRMA_1"/>
    <property type="match status" value="1"/>
</dbReference>
<dbReference type="PROSITE" id="PS01231">
    <property type="entry name" value="TRMA_2"/>
    <property type="match status" value="1"/>
</dbReference>
<comment type="function">
    <text evidence="1">Catalyzes the formation of 5-methyl-uridine at position 747 (m5U747) in 23S rRNA.</text>
</comment>
<comment type="catalytic activity">
    <reaction evidence="1">
        <text>uridine(747) in 23S rRNA + S-adenosyl-L-methionine = 5-methyluridine(747) in 23S rRNA + S-adenosyl-L-homocysteine + H(+)</text>
        <dbReference type="Rhea" id="RHEA:42628"/>
        <dbReference type="Rhea" id="RHEA-COMP:10154"/>
        <dbReference type="Rhea" id="RHEA-COMP:10155"/>
        <dbReference type="ChEBI" id="CHEBI:15378"/>
        <dbReference type="ChEBI" id="CHEBI:57856"/>
        <dbReference type="ChEBI" id="CHEBI:59789"/>
        <dbReference type="ChEBI" id="CHEBI:65315"/>
        <dbReference type="ChEBI" id="CHEBI:74447"/>
        <dbReference type="EC" id="2.1.1.189"/>
    </reaction>
</comment>
<comment type="similarity">
    <text evidence="1">Belongs to the class I-like SAM-binding methyltransferase superfamily. RNA M5U methyltransferase family. RlmC subfamily.</text>
</comment>
<feature type="chain" id="PRO_1000200876" description="23S rRNA (uracil(747)-C(5))-methyltransferase RlmC">
    <location>
        <begin position="1"/>
        <end position="375"/>
    </location>
</feature>
<feature type="active site" description="Nucleophile" evidence="1">
    <location>
        <position position="334"/>
    </location>
</feature>
<feature type="binding site" evidence="1">
    <location>
        <position position="3"/>
    </location>
    <ligand>
        <name>[4Fe-4S] cluster</name>
        <dbReference type="ChEBI" id="CHEBI:49883"/>
    </ligand>
</feature>
<feature type="binding site" evidence="1">
    <location>
        <position position="11"/>
    </location>
    <ligand>
        <name>[4Fe-4S] cluster</name>
        <dbReference type="ChEBI" id="CHEBI:49883"/>
    </ligand>
</feature>
<feature type="binding site" evidence="1">
    <location>
        <position position="14"/>
    </location>
    <ligand>
        <name>[4Fe-4S] cluster</name>
        <dbReference type="ChEBI" id="CHEBI:49883"/>
    </ligand>
</feature>
<feature type="binding site" evidence="1">
    <location>
        <position position="87"/>
    </location>
    <ligand>
        <name>[4Fe-4S] cluster</name>
        <dbReference type="ChEBI" id="CHEBI:49883"/>
    </ligand>
</feature>
<feature type="binding site" evidence="1">
    <location>
        <position position="212"/>
    </location>
    <ligand>
        <name>S-adenosyl-L-methionine</name>
        <dbReference type="ChEBI" id="CHEBI:59789"/>
    </ligand>
</feature>
<feature type="binding site" evidence="1">
    <location>
        <position position="241"/>
    </location>
    <ligand>
        <name>S-adenosyl-L-methionine</name>
        <dbReference type="ChEBI" id="CHEBI:59789"/>
    </ligand>
</feature>
<feature type="binding site" evidence="1">
    <location>
        <position position="262"/>
    </location>
    <ligand>
        <name>S-adenosyl-L-methionine</name>
        <dbReference type="ChEBI" id="CHEBI:59789"/>
    </ligand>
</feature>
<feature type="binding site" evidence="1">
    <location>
        <position position="307"/>
    </location>
    <ligand>
        <name>S-adenosyl-L-methionine</name>
        <dbReference type="ChEBI" id="CHEBI:59789"/>
    </ligand>
</feature>
<gene>
    <name evidence="1" type="primary">rlmC</name>
    <name type="synonym">rumB</name>
    <name type="ordered locus">SSPA1750</name>
</gene>
<organism>
    <name type="scientific">Salmonella paratyphi A (strain AKU_12601)</name>
    <dbReference type="NCBI Taxonomy" id="554290"/>
    <lineage>
        <taxon>Bacteria</taxon>
        <taxon>Pseudomonadati</taxon>
        <taxon>Pseudomonadota</taxon>
        <taxon>Gammaproteobacteria</taxon>
        <taxon>Enterobacterales</taxon>
        <taxon>Enterobacteriaceae</taxon>
        <taxon>Salmonella</taxon>
    </lineage>
</organism>
<accession>B5BBV5</accession>
<name>RLMC_SALPK</name>
<evidence type="ECO:0000255" key="1">
    <source>
        <dbReference type="HAMAP-Rule" id="MF_01012"/>
    </source>
</evidence>
<sequence length="375" mass="42029">MQCALYDAGRCRSCQWITQSVNEQLSAKTADLHRLLAGLPVEQWCAPTGGPEQHFRNKAKMVVSGSVEKPLFGMLHRDGTPVDLCGCPLYPASFAPVFSALKPFIARAGLTPYNVARKRGELKYLLLTESQFDGGMMLRFVLRSETKLTQLRAALPWLRAQLPQLRVITANIQPVHMAIMEGETEIYLTDQQALAERFNDVPLWIRPQSFFQTNPTVASRLYATARDWVGQLPVRHMWDLFCGVGGFGLHCATPQMQLTGIEIAPEAIACAKQSAAELGLTRLHFQALDSTQFATAQGETPDLVLVNPPRRGIGKPLCDYLAQMAPRFIIYSSCNAQTMAQDIRHLPNYRIQRVQLFDMFPHTAHYEVLTLLCRQ</sequence>
<keyword id="KW-0004">4Fe-4S</keyword>
<keyword id="KW-0408">Iron</keyword>
<keyword id="KW-0411">Iron-sulfur</keyword>
<keyword id="KW-0479">Metal-binding</keyword>
<keyword id="KW-0489">Methyltransferase</keyword>
<keyword id="KW-0698">rRNA processing</keyword>
<keyword id="KW-0949">S-adenosyl-L-methionine</keyword>
<keyword id="KW-0808">Transferase</keyword>